<feature type="chain" id="PRO_1000132049" description="5-oxoprolinase subunit A">
    <location>
        <begin position="1"/>
        <end position="244"/>
    </location>
</feature>
<name>PXPA_ECO45</name>
<comment type="function">
    <text evidence="1">Catalyzes the cleavage of 5-oxoproline to form L-glutamate coupled to the hydrolysis of ATP to ADP and inorganic phosphate.</text>
</comment>
<comment type="catalytic activity">
    <reaction evidence="1">
        <text>5-oxo-L-proline + ATP + 2 H2O = L-glutamate + ADP + phosphate + H(+)</text>
        <dbReference type="Rhea" id="RHEA:10348"/>
        <dbReference type="ChEBI" id="CHEBI:15377"/>
        <dbReference type="ChEBI" id="CHEBI:15378"/>
        <dbReference type="ChEBI" id="CHEBI:29985"/>
        <dbReference type="ChEBI" id="CHEBI:30616"/>
        <dbReference type="ChEBI" id="CHEBI:43474"/>
        <dbReference type="ChEBI" id="CHEBI:58402"/>
        <dbReference type="ChEBI" id="CHEBI:456216"/>
        <dbReference type="EC" id="3.5.2.9"/>
    </reaction>
</comment>
<comment type="subunit">
    <text evidence="1">Forms a complex composed of PxpA, PxpB and PxpC.</text>
</comment>
<comment type="similarity">
    <text evidence="1">Belongs to the LamB/PxpA family.</text>
</comment>
<organism>
    <name type="scientific">Escherichia coli O45:K1 (strain S88 / ExPEC)</name>
    <dbReference type="NCBI Taxonomy" id="585035"/>
    <lineage>
        <taxon>Bacteria</taxon>
        <taxon>Pseudomonadati</taxon>
        <taxon>Pseudomonadota</taxon>
        <taxon>Gammaproteobacteria</taxon>
        <taxon>Enterobacterales</taxon>
        <taxon>Enterobacteriaceae</taxon>
        <taxon>Escherichia</taxon>
    </lineage>
</organism>
<evidence type="ECO:0000255" key="1">
    <source>
        <dbReference type="HAMAP-Rule" id="MF_00691"/>
    </source>
</evidence>
<dbReference type="EC" id="3.5.2.9" evidence="1"/>
<dbReference type="EMBL" id="CU928161">
    <property type="protein sequence ID" value="CAR02081.1"/>
    <property type="molecule type" value="Genomic_DNA"/>
</dbReference>
<dbReference type="RefSeq" id="WP_000687123.1">
    <property type="nucleotide sequence ID" value="NC_011742.1"/>
</dbReference>
<dbReference type="SMR" id="B7MFX2"/>
<dbReference type="KEGG" id="ecz:ECS88_0741"/>
<dbReference type="HOGENOM" id="CLU_069535_0_0_6"/>
<dbReference type="Proteomes" id="UP000000747">
    <property type="component" value="Chromosome"/>
</dbReference>
<dbReference type="GO" id="GO:0017168">
    <property type="term" value="F:5-oxoprolinase (ATP-hydrolyzing) activity"/>
    <property type="evidence" value="ECO:0007669"/>
    <property type="project" value="UniProtKB-UniRule"/>
</dbReference>
<dbReference type="GO" id="GO:0005524">
    <property type="term" value="F:ATP binding"/>
    <property type="evidence" value="ECO:0007669"/>
    <property type="project" value="UniProtKB-UniRule"/>
</dbReference>
<dbReference type="GO" id="GO:0005975">
    <property type="term" value="P:carbohydrate metabolic process"/>
    <property type="evidence" value="ECO:0007669"/>
    <property type="project" value="InterPro"/>
</dbReference>
<dbReference type="CDD" id="cd10800">
    <property type="entry name" value="LamB_YcsF_YbgL_like"/>
    <property type="match status" value="1"/>
</dbReference>
<dbReference type="Gene3D" id="3.20.20.370">
    <property type="entry name" value="Glycoside hydrolase/deacetylase"/>
    <property type="match status" value="1"/>
</dbReference>
<dbReference type="HAMAP" id="MF_00691">
    <property type="entry name" value="PxpA"/>
    <property type="match status" value="1"/>
</dbReference>
<dbReference type="InterPro" id="IPR011330">
    <property type="entry name" value="Glyco_hydro/deAcase_b/a-brl"/>
</dbReference>
<dbReference type="InterPro" id="IPR005501">
    <property type="entry name" value="LamB/YcsF/PxpA-like"/>
</dbReference>
<dbReference type="NCBIfam" id="NF003812">
    <property type="entry name" value="PRK05406.1-1"/>
    <property type="match status" value="1"/>
</dbReference>
<dbReference type="NCBIfam" id="NF003814">
    <property type="entry name" value="PRK05406.1-3"/>
    <property type="match status" value="1"/>
</dbReference>
<dbReference type="NCBIfam" id="NF003815">
    <property type="entry name" value="PRK05406.1-4"/>
    <property type="match status" value="1"/>
</dbReference>
<dbReference type="NCBIfam" id="NF003816">
    <property type="entry name" value="PRK05406.1-5"/>
    <property type="match status" value="1"/>
</dbReference>
<dbReference type="PANTHER" id="PTHR30292:SF0">
    <property type="entry name" value="5-OXOPROLINASE SUBUNIT A"/>
    <property type="match status" value="1"/>
</dbReference>
<dbReference type="PANTHER" id="PTHR30292">
    <property type="entry name" value="UNCHARACTERIZED PROTEIN YBGL-RELATED"/>
    <property type="match status" value="1"/>
</dbReference>
<dbReference type="Pfam" id="PF03746">
    <property type="entry name" value="LamB_YcsF"/>
    <property type="match status" value="1"/>
</dbReference>
<dbReference type="SUPFAM" id="SSF88713">
    <property type="entry name" value="Glycoside hydrolase/deacetylase"/>
    <property type="match status" value="1"/>
</dbReference>
<accession>B7MFX2</accession>
<sequence length="244" mass="25856">MKIDLNADLGEGCASDAELLTLVSSANIACGFHAGDAQTMQACVREAIKNGVAIGAHPSFPDRENFGRSAMQLPPETVFAQTLYQIGALAAITRAQGGVMCHVKPHGMLYNQAAKEAQLADAIARAVYACDPALILVGLAGSELIRAGERYGLVTREEVFADRGYQADGSLVPRSQPGALIENEEQALAQTLEMVQYGRVKSITGEWAMVTAQTVCLHGDGEHALAFARRLRATFAEKGIVVAA</sequence>
<gene>
    <name evidence="1" type="primary">pxpA</name>
    <name type="ordered locus">ECS88_0741</name>
</gene>
<reference key="1">
    <citation type="journal article" date="2009" name="PLoS Genet.">
        <title>Organised genome dynamics in the Escherichia coli species results in highly diverse adaptive paths.</title>
        <authorList>
            <person name="Touchon M."/>
            <person name="Hoede C."/>
            <person name="Tenaillon O."/>
            <person name="Barbe V."/>
            <person name="Baeriswyl S."/>
            <person name="Bidet P."/>
            <person name="Bingen E."/>
            <person name="Bonacorsi S."/>
            <person name="Bouchier C."/>
            <person name="Bouvet O."/>
            <person name="Calteau A."/>
            <person name="Chiapello H."/>
            <person name="Clermont O."/>
            <person name="Cruveiller S."/>
            <person name="Danchin A."/>
            <person name="Diard M."/>
            <person name="Dossat C."/>
            <person name="Karoui M.E."/>
            <person name="Frapy E."/>
            <person name="Garry L."/>
            <person name="Ghigo J.M."/>
            <person name="Gilles A.M."/>
            <person name="Johnson J."/>
            <person name="Le Bouguenec C."/>
            <person name="Lescat M."/>
            <person name="Mangenot S."/>
            <person name="Martinez-Jehanne V."/>
            <person name="Matic I."/>
            <person name="Nassif X."/>
            <person name="Oztas S."/>
            <person name="Petit M.A."/>
            <person name="Pichon C."/>
            <person name="Rouy Z."/>
            <person name="Ruf C.S."/>
            <person name="Schneider D."/>
            <person name="Tourret J."/>
            <person name="Vacherie B."/>
            <person name="Vallenet D."/>
            <person name="Medigue C."/>
            <person name="Rocha E.P.C."/>
            <person name="Denamur E."/>
        </authorList>
    </citation>
    <scope>NUCLEOTIDE SEQUENCE [LARGE SCALE GENOMIC DNA]</scope>
    <source>
        <strain>S88 / ExPEC</strain>
    </source>
</reference>
<keyword id="KW-0067">ATP-binding</keyword>
<keyword id="KW-0378">Hydrolase</keyword>
<keyword id="KW-0547">Nucleotide-binding</keyword>
<keyword id="KW-1185">Reference proteome</keyword>
<proteinExistence type="inferred from homology"/>
<protein>
    <recommendedName>
        <fullName evidence="1">5-oxoprolinase subunit A</fullName>
        <shortName evidence="1">5-OPase subunit A</shortName>
        <ecNumber evidence="1">3.5.2.9</ecNumber>
    </recommendedName>
    <alternativeName>
        <fullName evidence="1">5-oxoprolinase (ATP-hydrolyzing) subunit A</fullName>
    </alternativeName>
</protein>